<feature type="chain" id="PRO_1000165131" description="CCA-adding enzyme">
    <location>
        <begin position="1"/>
        <end position="397"/>
    </location>
</feature>
<feature type="binding site" evidence="1">
    <location>
        <position position="26"/>
    </location>
    <ligand>
        <name>ATP</name>
        <dbReference type="ChEBI" id="CHEBI:30616"/>
    </ligand>
</feature>
<feature type="binding site" evidence="1">
    <location>
        <position position="26"/>
    </location>
    <ligand>
        <name>CTP</name>
        <dbReference type="ChEBI" id="CHEBI:37563"/>
    </ligand>
</feature>
<feature type="binding site" evidence="1">
    <location>
        <position position="29"/>
    </location>
    <ligand>
        <name>ATP</name>
        <dbReference type="ChEBI" id="CHEBI:30616"/>
    </ligand>
</feature>
<feature type="binding site" evidence="1">
    <location>
        <position position="29"/>
    </location>
    <ligand>
        <name>CTP</name>
        <dbReference type="ChEBI" id="CHEBI:37563"/>
    </ligand>
</feature>
<feature type="binding site" evidence="1">
    <location>
        <position position="39"/>
    </location>
    <ligand>
        <name>Mg(2+)</name>
        <dbReference type="ChEBI" id="CHEBI:18420"/>
    </ligand>
</feature>
<feature type="binding site" evidence="1">
    <location>
        <position position="41"/>
    </location>
    <ligand>
        <name>Mg(2+)</name>
        <dbReference type="ChEBI" id="CHEBI:18420"/>
    </ligand>
</feature>
<feature type="binding site" evidence="1">
    <location>
        <position position="110"/>
    </location>
    <ligand>
        <name>ATP</name>
        <dbReference type="ChEBI" id="CHEBI:30616"/>
    </ligand>
</feature>
<feature type="binding site" evidence="1">
    <location>
        <position position="110"/>
    </location>
    <ligand>
        <name>CTP</name>
        <dbReference type="ChEBI" id="CHEBI:37563"/>
    </ligand>
</feature>
<feature type="binding site" evidence="1">
    <location>
        <position position="153"/>
    </location>
    <ligand>
        <name>ATP</name>
        <dbReference type="ChEBI" id="CHEBI:30616"/>
    </ligand>
</feature>
<feature type="binding site" evidence="1">
    <location>
        <position position="153"/>
    </location>
    <ligand>
        <name>CTP</name>
        <dbReference type="ChEBI" id="CHEBI:37563"/>
    </ligand>
</feature>
<feature type="binding site" evidence="1">
    <location>
        <position position="156"/>
    </location>
    <ligand>
        <name>ATP</name>
        <dbReference type="ChEBI" id="CHEBI:30616"/>
    </ligand>
</feature>
<feature type="binding site" evidence="1">
    <location>
        <position position="156"/>
    </location>
    <ligand>
        <name>CTP</name>
        <dbReference type="ChEBI" id="CHEBI:37563"/>
    </ligand>
</feature>
<feature type="binding site" evidence="1">
    <location>
        <position position="159"/>
    </location>
    <ligand>
        <name>ATP</name>
        <dbReference type="ChEBI" id="CHEBI:30616"/>
    </ligand>
</feature>
<feature type="binding site" evidence="1">
    <location>
        <position position="159"/>
    </location>
    <ligand>
        <name>CTP</name>
        <dbReference type="ChEBI" id="CHEBI:37563"/>
    </ligand>
</feature>
<feature type="binding site" evidence="1">
    <location>
        <position position="162"/>
    </location>
    <ligand>
        <name>ATP</name>
        <dbReference type="ChEBI" id="CHEBI:30616"/>
    </ligand>
</feature>
<feature type="binding site" evidence="1">
    <location>
        <position position="162"/>
    </location>
    <ligand>
        <name>CTP</name>
        <dbReference type="ChEBI" id="CHEBI:37563"/>
    </ligand>
</feature>
<dbReference type="EC" id="2.7.7.72" evidence="1"/>
<dbReference type="EMBL" id="CP001407">
    <property type="protein sequence ID" value="ACO27432.1"/>
    <property type="molecule type" value="Genomic_DNA"/>
</dbReference>
<dbReference type="RefSeq" id="WP_000402223.1">
    <property type="nucleotide sequence ID" value="NZ_CP009318.1"/>
</dbReference>
<dbReference type="SMR" id="C1EN33"/>
<dbReference type="KEGG" id="bcx:BCA_1595"/>
<dbReference type="PATRIC" id="fig|572264.18.peg.1543"/>
<dbReference type="Proteomes" id="UP000002210">
    <property type="component" value="Chromosome"/>
</dbReference>
<dbReference type="GO" id="GO:0005524">
    <property type="term" value="F:ATP binding"/>
    <property type="evidence" value="ECO:0007669"/>
    <property type="project" value="UniProtKB-UniRule"/>
</dbReference>
<dbReference type="GO" id="GO:0004810">
    <property type="term" value="F:CCA tRNA nucleotidyltransferase activity"/>
    <property type="evidence" value="ECO:0007669"/>
    <property type="project" value="UniProtKB-UniRule"/>
</dbReference>
<dbReference type="GO" id="GO:0000287">
    <property type="term" value="F:magnesium ion binding"/>
    <property type="evidence" value="ECO:0007669"/>
    <property type="project" value="UniProtKB-UniRule"/>
</dbReference>
<dbReference type="GO" id="GO:0000049">
    <property type="term" value="F:tRNA binding"/>
    <property type="evidence" value="ECO:0007669"/>
    <property type="project" value="UniProtKB-UniRule"/>
</dbReference>
<dbReference type="GO" id="GO:0042245">
    <property type="term" value="P:RNA repair"/>
    <property type="evidence" value="ECO:0007669"/>
    <property type="project" value="UniProtKB-KW"/>
</dbReference>
<dbReference type="GO" id="GO:0001680">
    <property type="term" value="P:tRNA 3'-terminal CCA addition"/>
    <property type="evidence" value="ECO:0007669"/>
    <property type="project" value="UniProtKB-UniRule"/>
</dbReference>
<dbReference type="CDD" id="cd05398">
    <property type="entry name" value="NT_ClassII-CCAase"/>
    <property type="match status" value="1"/>
</dbReference>
<dbReference type="Gene3D" id="1.10.110.30">
    <property type="match status" value="1"/>
</dbReference>
<dbReference type="Gene3D" id="1.10.246.80">
    <property type="match status" value="1"/>
</dbReference>
<dbReference type="Gene3D" id="1.20.58.560">
    <property type="match status" value="1"/>
</dbReference>
<dbReference type="Gene3D" id="3.30.460.10">
    <property type="entry name" value="Beta Polymerase, domain 2"/>
    <property type="match status" value="1"/>
</dbReference>
<dbReference type="HAMAP" id="MF_01263">
    <property type="entry name" value="CCA_bact_type3"/>
    <property type="match status" value="1"/>
</dbReference>
<dbReference type="InterPro" id="IPR050264">
    <property type="entry name" value="Bact_CCA-adding_enz_type3_sf"/>
</dbReference>
<dbReference type="InterPro" id="IPR032810">
    <property type="entry name" value="CCA-adding_enz_C"/>
</dbReference>
<dbReference type="InterPro" id="IPR023068">
    <property type="entry name" value="CCA-adding_enz_firmicutes"/>
</dbReference>
<dbReference type="InterPro" id="IPR043519">
    <property type="entry name" value="NT_sf"/>
</dbReference>
<dbReference type="InterPro" id="IPR002646">
    <property type="entry name" value="PolA_pol_head_dom"/>
</dbReference>
<dbReference type="InterPro" id="IPR032828">
    <property type="entry name" value="PolyA_RNA-bd"/>
</dbReference>
<dbReference type="NCBIfam" id="NF009814">
    <property type="entry name" value="PRK13299.1"/>
    <property type="match status" value="1"/>
</dbReference>
<dbReference type="PANTHER" id="PTHR46173">
    <property type="entry name" value="CCA TRNA NUCLEOTIDYLTRANSFERASE 1, MITOCHONDRIAL"/>
    <property type="match status" value="1"/>
</dbReference>
<dbReference type="PANTHER" id="PTHR46173:SF1">
    <property type="entry name" value="CCA TRNA NUCLEOTIDYLTRANSFERASE 1, MITOCHONDRIAL"/>
    <property type="match status" value="1"/>
</dbReference>
<dbReference type="Pfam" id="PF01743">
    <property type="entry name" value="PolyA_pol"/>
    <property type="match status" value="1"/>
</dbReference>
<dbReference type="Pfam" id="PF12627">
    <property type="entry name" value="PolyA_pol_RNAbd"/>
    <property type="match status" value="1"/>
</dbReference>
<dbReference type="Pfam" id="PF13735">
    <property type="entry name" value="tRNA_NucTran2_2"/>
    <property type="match status" value="1"/>
</dbReference>
<dbReference type="SUPFAM" id="SSF81301">
    <property type="entry name" value="Nucleotidyltransferase"/>
    <property type="match status" value="1"/>
</dbReference>
<dbReference type="SUPFAM" id="SSF81891">
    <property type="entry name" value="Poly A polymerase C-terminal region-like"/>
    <property type="match status" value="1"/>
</dbReference>
<comment type="function">
    <text evidence="1">Catalyzes the addition and repair of the essential 3'-terminal CCA sequence in tRNAs without using a nucleic acid template. Adds these three nucleotides in the order of C, C, and A to the tRNA nucleotide-73, using CTP and ATP as substrates and producing inorganic pyrophosphate. tRNA 3'-terminal CCA addition is required both for tRNA processing and repair. Also involved in tRNA surveillance by mediating tandem CCA addition to generate a CCACCA at the 3' terminus of unstable tRNAs. While stable tRNAs receive only 3'-terminal CCA, unstable tRNAs are marked with CCACCA and rapidly degraded.</text>
</comment>
<comment type="catalytic activity">
    <reaction evidence="1">
        <text>a tRNA precursor + 2 CTP + ATP = a tRNA with a 3' CCA end + 3 diphosphate</text>
        <dbReference type="Rhea" id="RHEA:14433"/>
        <dbReference type="Rhea" id="RHEA-COMP:10465"/>
        <dbReference type="Rhea" id="RHEA-COMP:10468"/>
        <dbReference type="ChEBI" id="CHEBI:30616"/>
        <dbReference type="ChEBI" id="CHEBI:33019"/>
        <dbReference type="ChEBI" id="CHEBI:37563"/>
        <dbReference type="ChEBI" id="CHEBI:74896"/>
        <dbReference type="ChEBI" id="CHEBI:83071"/>
        <dbReference type="EC" id="2.7.7.72"/>
    </reaction>
</comment>
<comment type="catalytic activity">
    <reaction evidence="1">
        <text>a tRNA with a 3' CCA end + 2 CTP + ATP = a tRNA with a 3' CCACCA end + 3 diphosphate</text>
        <dbReference type="Rhea" id="RHEA:76235"/>
        <dbReference type="Rhea" id="RHEA-COMP:10468"/>
        <dbReference type="Rhea" id="RHEA-COMP:18655"/>
        <dbReference type="ChEBI" id="CHEBI:30616"/>
        <dbReference type="ChEBI" id="CHEBI:33019"/>
        <dbReference type="ChEBI" id="CHEBI:37563"/>
        <dbReference type="ChEBI" id="CHEBI:83071"/>
        <dbReference type="ChEBI" id="CHEBI:195187"/>
    </reaction>
    <physiologicalReaction direction="left-to-right" evidence="1">
        <dbReference type="Rhea" id="RHEA:76236"/>
    </physiologicalReaction>
</comment>
<comment type="cofactor">
    <cofactor evidence="1">
        <name>Mg(2+)</name>
        <dbReference type="ChEBI" id="CHEBI:18420"/>
    </cofactor>
</comment>
<comment type="subunit">
    <text evidence="1">Homodimer.</text>
</comment>
<comment type="miscellaneous">
    <text evidence="1">A single active site specifically recognizes both ATP and CTP and is responsible for their addition.</text>
</comment>
<comment type="similarity">
    <text evidence="1">Belongs to the tRNA nucleotidyltransferase/poly(A) polymerase family. Bacterial CCA-adding enzyme type 3 subfamily.</text>
</comment>
<reference key="1">
    <citation type="submission" date="2009-02" db="EMBL/GenBank/DDBJ databases">
        <title>Genome sequence of Bacillus cereus 03BB102.</title>
        <authorList>
            <person name="Dodson R.J."/>
            <person name="Jackson P."/>
            <person name="Munk A.C."/>
            <person name="Brettin T."/>
            <person name="Bruce D."/>
            <person name="Detter C."/>
            <person name="Tapia R."/>
            <person name="Han C."/>
            <person name="Sutton G."/>
            <person name="Sims D."/>
        </authorList>
    </citation>
    <scope>NUCLEOTIDE SEQUENCE [LARGE SCALE GENOMIC DNA]</scope>
    <source>
        <strain>03BB102</strain>
    </source>
</reference>
<gene>
    <name evidence="1" type="primary">cca</name>
    <name type="ordered locus">BCA_1595</name>
</gene>
<keyword id="KW-0067">ATP-binding</keyword>
<keyword id="KW-0460">Magnesium</keyword>
<keyword id="KW-0479">Metal-binding</keyword>
<keyword id="KW-0547">Nucleotide-binding</keyword>
<keyword id="KW-0548">Nucleotidyltransferase</keyword>
<keyword id="KW-0692">RNA repair</keyword>
<keyword id="KW-0694">RNA-binding</keyword>
<keyword id="KW-0808">Transferase</keyword>
<keyword id="KW-0819">tRNA processing</keyword>
<evidence type="ECO:0000255" key="1">
    <source>
        <dbReference type="HAMAP-Rule" id="MF_01263"/>
    </source>
</evidence>
<sequence>MEIFKKASSIIETLKQQGHEAYFVGGSVRDLIIDRPIGDIDIATSALPEEVMGIFPRHVPVGLEHGTVIVVENGEPYEVTTFRTESEYEDFRRPSSVQFVRSLEEDLKRRDFTMNAIAMTEEGEMVDLFAGQEAIQKREIVTVGNAADRFQEDALRMMRGIRFVSTLGFSLETKTKQAIETYGHLLEHIAIERITVEFEKLLTGTYCVKGLKELVETKLFSHLPYLQMSEERLLKATQYNWDSFETDIEAWAFFLYCIGEEHPSVFLRQWKFSNKKIKDIVAVLLTIRKRKEKDWDTVLLYKTGIHIAEMSERVYEAMIESYDNTSVKRVQTLFEALPIKSRQEMNVTGNDLLNWANKKPGPWVAEMIQNIEEAIVQGNVVNEKECIREWLQECNLL</sequence>
<protein>
    <recommendedName>
        <fullName evidence="1">CCA-adding enzyme</fullName>
        <ecNumber evidence="1">2.7.7.72</ecNumber>
    </recommendedName>
    <alternativeName>
        <fullName evidence="1">CCA tRNA nucleotidyltransferase</fullName>
    </alternativeName>
    <alternativeName>
        <fullName evidence="1">tRNA CCA-pyrophosphorylase</fullName>
    </alternativeName>
    <alternativeName>
        <fullName evidence="1">tRNA adenylyl-/cytidylyl- transferase</fullName>
    </alternativeName>
    <alternativeName>
        <fullName evidence="1">tRNA nucleotidyltransferase</fullName>
    </alternativeName>
    <alternativeName>
        <fullName evidence="1">tRNA-NT</fullName>
    </alternativeName>
</protein>
<name>CCA_BACC3</name>
<organism>
    <name type="scientific">Bacillus cereus (strain 03BB102)</name>
    <dbReference type="NCBI Taxonomy" id="572264"/>
    <lineage>
        <taxon>Bacteria</taxon>
        <taxon>Bacillati</taxon>
        <taxon>Bacillota</taxon>
        <taxon>Bacilli</taxon>
        <taxon>Bacillales</taxon>
        <taxon>Bacillaceae</taxon>
        <taxon>Bacillus</taxon>
        <taxon>Bacillus cereus group</taxon>
    </lineage>
</organism>
<proteinExistence type="inferred from homology"/>
<accession>C1EN33</accession>